<protein>
    <recommendedName>
        <fullName evidence="1">Histidine ammonia-lyase</fullName>
        <shortName evidence="1">Histidase</shortName>
        <ecNumber evidence="1">4.3.1.3</ecNumber>
    </recommendedName>
</protein>
<name>HUTH_BRUO2</name>
<gene>
    <name evidence="1" type="primary">hutH</name>
    <name type="ordered locus">BOV_A0872</name>
</gene>
<dbReference type="EC" id="4.3.1.3" evidence="1"/>
<dbReference type="EMBL" id="CP000709">
    <property type="protein sequence ID" value="ABQ62260.1"/>
    <property type="molecule type" value="Genomic_DNA"/>
</dbReference>
<dbReference type="RefSeq" id="WP_006155733.1">
    <property type="nucleotide sequence ID" value="NC_009504.1"/>
</dbReference>
<dbReference type="SMR" id="A5VVJ6"/>
<dbReference type="GeneID" id="45126240"/>
<dbReference type="KEGG" id="bov:BOV_A0872"/>
<dbReference type="HOGENOM" id="CLU_014801_4_0_5"/>
<dbReference type="PhylomeDB" id="A5VVJ6"/>
<dbReference type="UniPathway" id="UPA00379">
    <property type="reaction ID" value="UER00549"/>
</dbReference>
<dbReference type="Proteomes" id="UP000006383">
    <property type="component" value="Chromosome II"/>
</dbReference>
<dbReference type="GO" id="GO:0005737">
    <property type="term" value="C:cytoplasm"/>
    <property type="evidence" value="ECO:0007669"/>
    <property type="project" value="UniProtKB-SubCell"/>
</dbReference>
<dbReference type="GO" id="GO:0004397">
    <property type="term" value="F:histidine ammonia-lyase activity"/>
    <property type="evidence" value="ECO:0007669"/>
    <property type="project" value="UniProtKB-UniRule"/>
</dbReference>
<dbReference type="GO" id="GO:0019556">
    <property type="term" value="P:L-histidine catabolic process to glutamate and formamide"/>
    <property type="evidence" value="ECO:0007669"/>
    <property type="project" value="UniProtKB-UniPathway"/>
</dbReference>
<dbReference type="GO" id="GO:0019557">
    <property type="term" value="P:L-histidine catabolic process to glutamate and formate"/>
    <property type="evidence" value="ECO:0007669"/>
    <property type="project" value="UniProtKB-UniPathway"/>
</dbReference>
<dbReference type="CDD" id="cd00332">
    <property type="entry name" value="PAL-HAL"/>
    <property type="match status" value="1"/>
</dbReference>
<dbReference type="FunFam" id="1.10.275.10:FF:000005">
    <property type="entry name" value="Histidine ammonia-lyase"/>
    <property type="match status" value="1"/>
</dbReference>
<dbReference type="FunFam" id="1.20.200.10:FF:000003">
    <property type="entry name" value="Histidine ammonia-lyase"/>
    <property type="match status" value="1"/>
</dbReference>
<dbReference type="Gene3D" id="1.20.200.10">
    <property type="entry name" value="Fumarase/aspartase (Central domain)"/>
    <property type="match status" value="1"/>
</dbReference>
<dbReference type="Gene3D" id="1.10.275.10">
    <property type="entry name" value="Fumarase/aspartase (N-terminal domain)"/>
    <property type="match status" value="1"/>
</dbReference>
<dbReference type="HAMAP" id="MF_00229">
    <property type="entry name" value="His_ammonia_lyase"/>
    <property type="match status" value="1"/>
</dbReference>
<dbReference type="InterPro" id="IPR001106">
    <property type="entry name" value="Aromatic_Lyase"/>
</dbReference>
<dbReference type="InterPro" id="IPR024083">
    <property type="entry name" value="Fumarase/histidase_N"/>
</dbReference>
<dbReference type="InterPro" id="IPR005921">
    <property type="entry name" value="HutH"/>
</dbReference>
<dbReference type="InterPro" id="IPR008948">
    <property type="entry name" value="L-Aspartase-like"/>
</dbReference>
<dbReference type="InterPro" id="IPR022313">
    <property type="entry name" value="Phe/His_NH3-lyase_AS"/>
</dbReference>
<dbReference type="NCBIfam" id="TIGR01225">
    <property type="entry name" value="hutH"/>
    <property type="match status" value="1"/>
</dbReference>
<dbReference type="NCBIfam" id="NF006871">
    <property type="entry name" value="PRK09367.1"/>
    <property type="match status" value="1"/>
</dbReference>
<dbReference type="PANTHER" id="PTHR10362">
    <property type="entry name" value="HISTIDINE AMMONIA-LYASE"/>
    <property type="match status" value="1"/>
</dbReference>
<dbReference type="Pfam" id="PF00221">
    <property type="entry name" value="Lyase_aromatic"/>
    <property type="match status" value="1"/>
</dbReference>
<dbReference type="SUPFAM" id="SSF48557">
    <property type="entry name" value="L-aspartase-like"/>
    <property type="match status" value="1"/>
</dbReference>
<dbReference type="PROSITE" id="PS00488">
    <property type="entry name" value="PAL_HISTIDASE"/>
    <property type="match status" value="1"/>
</dbReference>
<evidence type="ECO:0000255" key="1">
    <source>
        <dbReference type="HAMAP-Rule" id="MF_00229"/>
    </source>
</evidence>
<comment type="catalytic activity">
    <reaction evidence="1">
        <text>L-histidine = trans-urocanate + NH4(+)</text>
        <dbReference type="Rhea" id="RHEA:21232"/>
        <dbReference type="ChEBI" id="CHEBI:17771"/>
        <dbReference type="ChEBI" id="CHEBI:28938"/>
        <dbReference type="ChEBI" id="CHEBI:57595"/>
        <dbReference type="EC" id="4.3.1.3"/>
    </reaction>
</comment>
<comment type="pathway">
    <text evidence="1">Amino-acid degradation; L-histidine degradation into L-glutamate; N-formimidoyl-L-glutamate from L-histidine: step 1/3.</text>
</comment>
<comment type="subcellular location">
    <subcellularLocation>
        <location evidence="1">Cytoplasm</location>
    </subcellularLocation>
</comment>
<comment type="PTM">
    <text evidence="1">Contains an active site 4-methylidene-imidazol-5-one (MIO), which is formed autocatalytically by cyclization and dehydration of residues Ala-Ser-Gly.</text>
</comment>
<comment type="similarity">
    <text evidence="1">Belongs to the PAL/histidase family.</text>
</comment>
<reference key="1">
    <citation type="journal article" date="2009" name="PLoS ONE">
        <title>Genome degradation in Brucella ovis corresponds with narrowing of its host range and tissue tropism.</title>
        <authorList>
            <person name="Tsolis R.M."/>
            <person name="Seshadri R."/>
            <person name="Santos R.L."/>
            <person name="Sangari F.J."/>
            <person name="Lobo J.M."/>
            <person name="de Jong M.F."/>
            <person name="Ren Q."/>
            <person name="Myers G."/>
            <person name="Brinkac L.M."/>
            <person name="Nelson W.C."/>
            <person name="Deboy R.T."/>
            <person name="Angiuoli S."/>
            <person name="Khouri H."/>
            <person name="Dimitrov G."/>
            <person name="Robinson J.R."/>
            <person name="Mulligan S."/>
            <person name="Walker R.L."/>
            <person name="Elzer P.E."/>
            <person name="Hassan K.A."/>
            <person name="Paulsen I.T."/>
        </authorList>
    </citation>
    <scope>NUCLEOTIDE SEQUENCE [LARGE SCALE GENOMIC DNA]</scope>
    <source>
        <strain>ATCC 25840 / 63/290 / NCTC 10512</strain>
    </source>
</reference>
<organism>
    <name type="scientific">Brucella ovis (strain ATCC 25840 / 63/290 / NCTC 10512)</name>
    <dbReference type="NCBI Taxonomy" id="444178"/>
    <lineage>
        <taxon>Bacteria</taxon>
        <taxon>Pseudomonadati</taxon>
        <taxon>Pseudomonadota</taxon>
        <taxon>Alphaproteobacteria</taxon>
        <taxon>Hyphomicrobiales</taxon>
        <taxon>Brucellaceae</taxon>
        <taxon>Brucella/Ochrobactrum group</taxon>
        <taxon>Brucella</taxon>
    </lineage>
</organism>
<accession>A5VVJ6</accession>
<sequence length="511" mass="53240">MTIILKPGSVPLETLKKIYREGLPVRIDPAFHAGIEKAAARIAEIAAGDAPVYGINTGFGKLASIRIAAGDVATLQRNLILPHCCGVGEPLSENIVRLIMALKLVSLGRGASGVRLEVITLIEAMLEKGVIPMIPEKGSVGASGDLAPLAHMTAAMIGEGEAFYRGERLSGAKALGKAGLKPVVLAAKEGLALINGTQTSTALALAGLFRAHRAARTALITGALSTDAAMGSDAPFHEEIHQLRGHKGQIDAGRALRTLLEGSAIRRSHLEGDQRVQDPYCIRCQPQVDGACLDILRQAARTLEIEANAVTDNPLVLSDGRAVSGGNFHAEPVAFAADQIALAVCEIGAISQRRIALLVDPSLSFGLPAFLARKPGLNSGLMIAEVTSAALMSENKQMAHPASVDSTPTSANQEDHVSMACNGARRLLQMTANLNAIIGIEALTGALGVELRKPLTTSAELAKVIAALRAKVATLEEDRYMADDLKAAAELVADGTLSGVISAGILPDLEA</sequence>
<keyword id="KW-0963">Cytoplasm</keyword>
<keyword id="KW-0369">Histidine metabolism</keyword>
<keyword id="KW-0456">Lyase</keyword>
<feature type="chain" id="PRO_1000021546" description="Histidine ammonia-lyase">
    <location>
        <begin position="1"/>
        <end position="511"/>
    </location>
</feature>
<feature type="modified residue" description="2,3-didehydroalanine (Ser)" evidence="1">
    <location>
        <position position="143"/>
    </location>
</feature>
<feature type="cross-link" description="5-imidazolinone (Ala-Gly)" evidence="1">
    <location>
        <begin position="142"/>
        <end position="144"/>
    </location>
</feature>
<proteinExistence type="inferred from homology"/>